<proteinExistence type="inferred from homology"/>
<dbReference type="EMBL" id="BX950851">
    <property type="protein sequence ID" value="CAG73205.1"/>
    <property type="molecule type" value="Genomic_DNA"/>
</dbReference>
<dbReference type="RefSeq" id="WP_010296630.1">
    <property type="nucleotide sequence ID" value="NC_004547.2"/>
</dbReference>
<dbReference type="SMR" id="Q6DAG8"/>
<dbReference type="STRING" id="218491.ECA0285"/>
<dbReference type="GeneID" id="93388360"/>
<dbReference type="KEGG" id="eca:ECA0285"/>
<dbReference type="eggNOG" id="COG1660">
    <property type="taxonomic scope" value="Bacteria"/>
</dbReference>
<dbReference type="HOGENOM" id="CLU_059558_1_1_6"/>
<dbReference type="OrthoDB" id="9784461at2"/>
<dbReference type="Proteomes" id="UP000007966">
    <property type="component" value="Chromosome"/>
</dbReference>
<dbReference type="GO" id="GO:0005524">
    <property type="term" value="F:ATP binding"/>
    <property type="evidence" value="ECO:0007669"/>
    <property type="project" value="UniProtKB-UniRule"/>
</dbReference>
<dbReference type="GO" id="GO:0005525">
    <property type="term" value="F:GTP binding"/>
    <property type="evidence" value="ECO:0007669"/>
    <property type="project" value="UniProtKB-UniRule"/>
</dbReference>
<dbReference type="GO" id="GO:0003723">
    <property type="term" value="F:RNA binding"/>
    <property type="evidence" value="ECO:0007669"/>
    <property type="project" value="UniProtKB-KW"/>
</dbReference>
<dbReference type="Gene3D" id="3.40.50.300">
    <property type="entry name" value="P-loop containing nucleotide triphosphate hydrolases"/>
    <property type="match status" value="1"/>
</dbReference>
<dbReference type="HAMAP" id="MF_00636">
    <property type="entry name" value="RapZ_like"/>
    <property type="match status" value="1"/>
</dbReference>
<dbReference type="InterPro" id="IPR027417">
    <property type="entry name" value="P-loop_NTPase"/>
</dbReference>
<dbReference type="InterPro" id="IPR005337">
    <property type="entry name" value="RapZ-like"/>
</dbReference>
<dbReference type="InterPro" id="IPR053930">
    <property type="entry name" value="RapZ-like_N"/>
</dbReference>
<dbReference type="InterPro" id="IPR053931">
    <property type="entry name" value="RapZ_C"/>
</dbReference>
<dbReference type="NCBIfam" id="NF003828">
    <property type="entry name" value="PRK05416.1"/>
    <property type="match status" value="1"/>
</dbReference>
<dbReference type="PANTHER" id="PTHR30448">
    <property type="entry name" value="RNASE ADAPTER PROTEIN RAPZ"/>
    <property type="match status" value="1"/>
</dbReference>
<dbReference type="PANTHER" id="PTHR30448:SF0">
    <property type="entry name" value="RNASE ADAPTER PROTEIN RAPZ"/>
    <property type="match status" value="1"/>
</dbReference>
<dbReference type="Pfam" id="PF22740">
    <property type="entry name" value="PapZ_C"/>
    <property type="match status" value="1"/>
</dbReference>
<dbReference type="Pfam" id="PF03668">
    <property type="entry name" value="RapZ-like_N"/>
    <property type="match status" value="1"/>
</dbReference>
<dbReference type="PIRSF" id="PIRSF005052">
    <property type="entry name" value="P-loopkin"/>
    <property type="match status" value="1"/>
</dbReference>
<dbReference type="SUPFAM" id="SSF52540">
    <property type="entry name" value="P-loop containing nucleoside triphosphate hydrolases"/>
    <property type="match status" value="1"/>
</dbReference>
<gene>
    <name evidence="1" type="primary">rapZ</name>
    <name type="ordered locus">ECA0285</name>
</gene>
<keyword id="KW-0067">ATP-binding</keyword>
<keyword id="KW-0342">GTP-binding</keyword>
<keyword id="KW-0547">Nucleotide-binding</keyword>
<keyword id="KW-1185">Reference proteome</keyword>
<keyword id="KW-0694">RNA-binding</keyword>
<accession>Q6DAG8</accession>
<sequence>MVLMIVSGRSGSGKSVALRALEDMGFYCVDNLPVVLLPELANTLAARNISAAVSIDVRNMPESPEIFEHAMEQLPPSFSPQLLFLDADRNTLIRRYSDTRRLHPLSSKNLSLESAIDEESDLLEPLRSRADLIIDTSEMSVHELAEMLRTRLLGKRERELTMVFESFGFKHGIPIDADYVFDVRFLPNPHWDPKLRPMTGLDKPVASFLDRHTEVHNFIYQTRSYLELWLPMLETNNRSYLTVAIGCTGGKHRSVYVAEQLADYFRSRGKNVQSRHRTLEKRKPS</sequence>
<reference key="1">
    <citation type="journal article" date="2004" name="Proc. Natl. Acad. Sci. U.S.A.">
        <title>Genome sequence of the enterobacterial phytopathogen Erwinia carotovora subsp. atroseptica and characterization of virulence factors.</title>
        <authorList>
            <person name="Bell K.S."/>
            <person name="Sebaihia M."/>
            <person name="Pritchard L."/>
            <person name="Holden M.T.G."/>
            <person name="Hyman L.J."/>
            <person name="Holeva M.C."/>
            <person name="Thomson N.R."/>
            <person name="Bentley S.D."/>
            <person name="Churcher L.J.C."/>
            <person name="Mungall K."/>
            <person name="Atkin R."/>
            <person name="Bason N."/>
            <person name="Brooks K."/>
            <person name="Chillingworth T."/>
            <person name="Clark K."/>
            <person name="Doggett J."/>
            <person name="Fraser A."/>
            <person name="Hance Z."/>
            <person name="Hauser H."/>
            <person name="Jagels K."/>
            <person name="Moule S."/>
            <person name="Norbertczak H."/>
            <person name="Ormond D."/>
            <person name="Price C."/>
            <person name="Quail M.A."/>
            <person name="Sanders M."/>
            <person name="Walker D."/>
            <person name="Whitehead S."/>
            <person name="Salmond G.P.C."/>
            <person name="Birch P.R.J."/>
            <person name="Parkhill J."/>
            <person name="Toth I.K."/>
        </authorList>
    </citation>
    <scope>NUCLEOTIDE SEQUENCE [LARGE SCALE GENOMIC DNA]</scope>
    <source>
        <strain>SCRI 1043 / ATCC BAA-672</strain>
    </source>
</reference>
<name>RAPZ_PECAS</name>
<evidence type="ECO:0000255" key="1">
    <source>
        <dbReference type="HAMAP-Rule" id="MF_00636"/>
    </source>
</evidence>
<protein>
    <recommendedName>
        <fullName evidence="1">RNase adapter protein RapZ</fullName>
    </recommendedName>
</protein>
<feature type="chain" id="PRO_0000107709" description="RNase adapter protein RapZ">
    <location>
        <begin position="1"/>
        <end position="285"/>
    </location>
</feature>
<feature type="region of interest" description="RNA-binding" evidence="1">
    <location>
        <begin position="266"/>
        <end position="285"/>
    </location>
</feature>
<feature type="binding site" evidence="1">
    <location>
        <begin position="8"/>
        <end position="15"/>
    </location>
    <ligand>
        <name>ATP</name>
        <dbReference type="ChEBI" id="CHEBI:30616"/>
    </ligand>
</feature>
<feature type="binding site" evidence="1">
    <location>
        <begin position="56"/>
        <end position="59"/>
    </location>
    <ligand>
        <name>GTP</name>
        <dbReference type="ChEBI" id="CHEBI:37565"/>
    </ligand>
</feature>
<organism>
    <name type="scientific">Pectobacterium atrosepticum (strain SCRI 1043 / ATCC BAA-672)</name>
    <name type="common">Erwinia carotovora subsp. atroseptica</name>
    <dbReference type="NCBI Taxonomy" id="218491"/>
    <lineage>
        <taxon>Bacteria</taxon>
        <taxon>Pseudomonadati</taxon>
        <taxon>Pseudomonadota</taxon>
        <taxon>Gammaproteobacteria</taxon>
        <taxon>Enterobacterales</taxon>
        <taxon>Pectobacteriaceae</taxon>
        <taxon>Pectobacterium</taxon>
    </lineage>
</organism>
<comment type="function">
    <text evidence="1">Modulates the synthesis of GlmS, by affecting the processing and stability of the regulatory small RNA GlmZ. When glucosamine-6-phosphate (GlcN6P) concentrations are high in the cell, RapZ binds GlmZ and targets it to cleavage by RNase E. Consequently, GlmZ is inactivated and unable to activate GlmS synthesis. Under low GlcN6P concentrations, RapZ is sequestered and inactivated by an other regulatory small RNA, GlmY, preventing GlmZ degradation and leading to synthesis of GlmS.</text>
</comment>
<comment type="subunit">
    <text evidence="1">Homotrimer.</text>
</comment>
<comment type="similarity">
    <text evidence="1">Belongs to the RapZ-like family. RapZ subfamily.</text>
</comment>